<accession>A6KYK9</accession>
<name>EFTU_PHOV8</name>
<reference key="1">
    <citation type="journal article" date="2007" name="PLoS Biol.">
        <title>Evolution of symbiotic bacteria in the distal human intestine.</title>
        <authorList>
            <person name="Xu J."/>
            <person name="Mahowald M.A."/>
            <person name="Ley R.E."/>
            <person name="Lozupone C.A."/>
            <person name="Hamady M."/>
            <person name="Martens E.C."/>
            <person name="Henrissat B."/>
            <person name="Coutinho P.M."/>
            <person name="Minx P."/>
            <person name="Latreille P."/>
            <person name="Cordum H."/>
            <person name="Van Brunt A."/>
            <person name="Kim K."/>
            <person name="Fulton R.S."/>
            <person name="Fulton L.A."/>
            <person name="Clifton S.W."/>
            <person name="Wilson R.K."/>
            <person name="Knight R.D."/>
            <person name="Gordon J.I."/>
        </authorList>
    </citation>
    <scope>NUCLEOTIDE SEQUENCE [LARGE SCALE GENOMIC DNA]</scope>
    <source>
        <strain>ATCC 8482 / DSM 1447 / JCM 5826 / CCUG 4940 / NBRC 14291 / NCTC 11154</strain>
    </source>
</reference>
<protein>
    <recommendedName>
        <fullName evidence="2">Elongation factor Tu</fullName>
        <shortName evidence="2">EF-Tu</shortName>
        <ecNumber evidence="2">3.6.5.3</ecNumber>
    </recommendedName>
</protein>
<gene>
    <name evidence="2" type="primary">tuf</name>
    <name type="ordered locus">BVU_0820</name>
</gene>
<sequence length="394" mass="43563">MAKEKFERSKPHVNIGTIGHVDHGKTTLTAAITTVLAKKGLSELRSFDSIDNAPEEKERGITINTSHVEYQTANRHYAHVDCPGHADYVKNMVTGAAQMDGAIIVCAATDGPMPQTREHILLARQVNVPRLVVFLNKCDMVDDEEMLELVEMEMRELLSFYDFDGDNTPIIRGSALGALNGVPQWEDKVMELMDAVDTWIPLPPRDIDKPFLMPVEDVFSITGRGTVATGRIEAGIIHVGDEVEILGLGEDKKSVVTGVEMFRKLLDQGEAGDNVGLLLRGIDKNEIKRGMILCKPGQVKAHSKFKAEVYILKKEEGGRHTPFHNKYRPQFYLRTMDCTGEITLPEGTEMVMPGDNVTITVELIYPVALNVGLRFAIREGGRTVGAGQITELLD</sequence>
<evidence type="ECO:0000250" key="1"/>
<evidence type="ECO:0000255" key="2">
    <source>
        <dbReference type="HAMAP-Rule" id="MF_00118"/>
    </source>
</evidence>
<organism>
    <name type="scientific">Phocaeicola vulgatus (strain ATCC 8482 / DSM 1447 / JCM 5826 / CCUG 4940 / NBRC 14291 / NCTC 11154)</name>
    <name type="common">Bacteroides vulgatus</name>
    <dbReference type="NCBI Taxonomy" id="435590"/>
    <lineage>
        <taxon>Bacteria</taxon>
        <taxon>Pseudomonadati</taxon>
        <taxon>Bacteroidota</taxon>
        <taxon>Bacteroidia</taxon>
        <taxon>Bacteroidales</taxon>
        <taxon>Bacteroidaceae</taxon>
        <taxon>Phocaeicola</taxon>
    </lineage>
</organism>
<keyword id="KW-0963">Cytoplasm</keyword>
<keyword id="KW-0251">Elongation factor</keyword>
<keyword id="KW-0342">GTP-binding</keyword>
<keyword id="KW-0378">Hydrolase</keyword>
<keyword id="KW-0460">Magnesium</keyword>
<keyword id="KW-0479">Metal-binding</keyword>
<keyword id="KW-0547">Nucleotide-binding</keyword>
<keyword id="KW-0648">Protein biosynthesis</keyword>
<feature type="chain" id="PRO_1000015612" description="Elongation factor Tu">
    <location>
        <begin position="1"/>
        <end position="394"/>
    </location>
</feature>
<feature type="domain" description="tr-type G">
    <location>
        <begin position="10"/>
        <end position="205"/>
    </location>
</feature>
<feature type="region of interest" description="G1" evidence="1">
    <location>
        <begin position="19"/>
        <end position="26"/>
    </location>
</feature>
<feature type="region of interest" description="G2" evidence="1">
    <location>
        <begin position="60"/>
        <end position="64"/>
    </location>
</feature>
<feature type="region of interest" description="G3" evidence="1">
    <location>
        <begin position="81"/>
        <end position="84"/>
    </location>
</feature>
<feature type="region of interest" description="G4" evidence="1">
    <location>
        <begin position="136"/>
        <end position="139"/>
    </location>
</feature>
<feature type="region of interest" description="G5" evidence="1">
    <location>
        <begin position="174"/>
        <end position="176"/>
    </location>
</feature>
<feature type="binding site" evidence="2">
    <location>
        <begin position="19"/>
        <end position="26"/>
    </location>
    <ligand>
        <name>GTP</name>
        <dbReference type="ChEBI" id="CHEBI:37565"/>
    </ligand>
</feature>
<feature type="binding site" evidence="2">
    <location>
        <position position="26"/>
    </location>
    <ligand>
        <name>Mg(2+)</name>
        <dbReference type="ChEBI" id="CHEBI:18420"/>
    </ligand>
</feature>
<feature type="binding site" evidence="2">
    <location>
        <begin position="81"/>
        <end position="85"/>
    </location>
    <ligand>
        <name>GTP</name>
        <dbReference type="ChEBI" id="CHEBI:37565"/>
    </ligand>
</feature>
<feature type="binding site" evidence="2">
    <location>
        <begin position="136"/>
        <end position="139"/>
    </location>
    <ligand>
        <name>GTP</name>
        <dbReference type="ChEBI" id="CHEBI:37565"/>
    </ligand>
</feature>
<proteinExistence type="inferred from homology"/>
<comment type="function">
    <text evidence="2">GTP hydrolase that promotes the GTP-dependent binding of aminoacyl-tRNA to the A-site of ribosomes during protein biosynthesis.</text>
</comment>
<comment type="catalytic activity">
    <reaction evidence="2">
        <text>GTP + H2O = GDP + phosphate + H(+)</text>
        <dbReference type="Rhea" id="RHEA:19669"/>
        <dbReference type="ChEBI" id="CHEBI:15377"/>
        <dbReference type="ChEBI" id="CHEBI:15378"/>
        <dbReference type="ChEBI" id="CHEBI:37565"/>
        <dbReference type="ChEBI" id="CHEBI:43474"/>
        <dbReference type="ChEBI" id="CHEBI:58189"/>
        <dbReference type="EC" id="3.6.5.3"/>
    </reaction>
    <physiologicalReaction direction="left-to-right" evidence="2">
        <dbReference type="Rhea" id="RHEA:19670"/>
    </physiologicalReaction>
</comment>
<comment type="subunit">
    <text evidence="2">Monomer.</text>
</comment>
<comment type="subcellular location">
    <subcellularLocation>
        <location evidence="2">Cytoplasm</location>
    </subcellularLocation>
</comment>
<comment type="similarity">
    <text evidence="2">Belongs to the TRAFAC class translation factor GTPase superfamily. Classic translation factor GTPase family. EF-Tu/EF-1A subfamily.</text>
</comment>
<dbReference type="EC" id="3.6.5.3" evidence="2"/>
<dbReference type="EMBL" id="CP000139">
    <property type="protein sequence ID" value="ABR38523.1"/>
    <property type="molecule type" value="Genomic_DNA"/>
</dbReference>
<dbReference type="RefSeq" id="WP_005844822.1">
    <property type="nucleotide sequence ID" value="NZ_JANSWM010000035.1"/>
</dbReference>
<dbReference type="SMR" id="A6KYK9"/>
<dbReference type="STRING" id="435590.BVU_0820"/>
<dbReference type="PaxDb" id="435590-BVU_0820"/>
<dbReference type="GeneID" id="5301787"/>
<dbReference type="KEGG" id="bvu:BVU_0820"/>
<dbReference type="eggNOG" id="COG0050">
    <property type="taxonomic scope" value="Bacteria"/>
</dbReference>
<dbReference type="HOGENOM" id="CLU_007265_0_1_10"/>
<dbReference type="BioCyc" id="BVUL435590:G1G59-863-MONOMER"/>
<dbReference type="Proteomes" id="UP000002861">
    <property type="component" value="Chromosome"/>
</dbReference>
<dbReference type="GO" id="GO:0005829">
    <property type="term" value="C:cytosol"/>
    <property type="evidence" value="ECO:0007669"/>
    <property type="project" value="TreeGrafter"/>
</dbReference>
<dbReference type="GO" id="GO:0005525">
    <property type="term" value="F:GTP binding"/>
    <property type="evidence" value="ECO:0007669"/>
    <property type="project" value="UniProtKB-UniRule"/>
</dbReference>
<dbReference type="GO" id="GO:0003924">
    <property type="term" value="F:GTPase activity"/>
    <property type="evidence" value="ECO:0007669"/>
    <property type="project" value="InterPro"/>
</dbReference>
<dbReference type="GO" id="GO:0003746">
    <property type="term" value="F:translation elongation factor activity"/>
    <property type="evidence" value="ECO:0007669"/>
    <property type="project" value="UniProtKB-UniRule"/>
</dbReference>
<dbReference type="CDD" id="cd01884">
    <property type="entry name" value="EF_Tu"/>
    <property type="match status" value="1"/>
</dbReference>
<dbReference type="CDD" id="cd03697">
    <property type="entry name" value="EFTU_II"/>
    <property type="match status" value="1"/>
</dbReference>
<dbReference type="CDD" id="cd03707">
    <property type="entry name" value="EFTU_III"/>
    <property type="match status" value="1"/>
</dbReference>
<dbReference type="FunFam" id="2.40.30.10:FF:000002">
    <property type="entry name" value="Elongation factor Tu"/>
    <property type="match status" value="1"/>
</dbReference>
<dbReference type="FunFam" id="3.40.50.300:FF:000003">
    <property type="entry name" value="Elongation factor Tu"/>
    <property type="match status" value="1"/>
</dbReference>
<dbReference type="FunFam" id="2.40.30.10:FF:000020">
    <property type="entry name" value="Translation elongation factor EF-1"/>
    <property type="match status" value="1"/>
</dbReference>
<dbReference type="Gene3D" id="3.40.50.300">
    <property type="entry name" value="P-loop containing nucleotide triphosphate hydrolases"/>
    <property type="match status" value="1"/>
</dbReference>
<dbReference type="Gene3D" id="2.40.30.10">
    <property type="entry name" value="Translation factors"/>
    <property type="match status" value="2"/>
</dbReference>
<dbReference type="HAMAP" id="MF_00118_B">
    <property type="entry name" value="EF_Tu_B"/>
    <property type="match status" value="1"/>
</dbReference>
<dbReference type="InterPro" id="IPR041709">
    <property type="entry name" value="EF-Tu_GTP-bd"/>
</dbReference>
<dbReference type="InterPro" id="IPR050055">
    <property type="entry name" value="EF-Tu_GTPase"/>
</dbReference>
<dbReference type="InterPro" id="IPR004161">
    <property type="entry name" value="EFTu-like_2"/>
</dbReference>
<dbReference type="InterPro" id="IPR033720">
    <property type="entry name" value="EFTU_2"/>
</dbReference>
<dbReference type="InterPro" id="IPR031157">
    <property type="entry name" value="G_TR_CS"/>
</dbReference>
<dbReference type="InterPro" id="IPR027417">
    <property type="entry name" value="P-loop_NTPase"/>
</dbReference>
<dbReference type="InterPro" id="IPR005225">
    <property type="entry name" value="Small_GTP-bd"/>
</dbReference>
<dbReference type="InterPro" id="IPR000795">
    <property type="entry name" value="T_Tr_GTP-bd_dom"/>
</dbReference>
<dbReference type="InterPro" id="IPR009000">
    <property type="entry name" value="Transl_B-barrel_sf"/>
</dbReference>
<dbReference type="InterPro" id="IPR009001">
    <property type="entry name" value="Transl_elong_EF1A/Init_IF2_C"/>
</dbReference>
<dbReference type="InterPro" id="IPR004541">
    <property type="entry name" value="Transl_elong_EFTu/EF1A_bac/org"/>
</dbReference>
<dbReference type="InterPro" id="IPR004160">
    <property type="entry name" value="Transl_elong_EFTu/EF1A_C"/>
</dbReference>
<dbReference type="NCBIfam" id="TIGR00485">
    <property type="entry name" value="EF-Tu"/>
    <property type="match status" value="1"/>
</dbReference>
<dbReference type="NCBIfam" id="NF000766">
    <property type="entry name" value="PRK00049.1"/>
    <property type="match status" value="1"/>
</dbReference>
<dbReference type="NCBIfam" id="NF009372">
    <property type="entry name" value="PRK12735.1"/>
    <property type="match status" value="1"/>
</dbReference>
<dbReference type="NCBIfam" id="NF009373">
    <property type="entry name" value="PRK12736.1"/>
    <property type="match status" value="1"/>
</dbReference>
<dbReference type="NCBIfam" id="TIGR00231">
    <property type="entry name" value="small_GTP"/>
    <property type="match status" value="1"/>
</dbReference>
<dbReference type="PANTHER" id="PTHR43721:SF22">
    <property type="entry name" value="ELONGATION FACTOR TU, MITOCHONDRIAL"/>
    <property type="match status" value="1"/>
</dbReference>
<dbReference type="PANTHER" id="PTHR43721">
    <property type="entry name" value="ELONGATION FACTOR TU-RELATED"/>
    <property type="match status" value="1"/>
</dbReference>
<dbReference type="Pfam" id="PF00009">
    <property type="entry name" value="GTP_EFTU"/>
    <property type="match status" value="1"/>
</dbReference>
<dbReference type="Pfam" id="PF03144">
    <property type="entry name" value="GTP_EFTU_D2"/>
    <property type="match status" value="1"/>
</dbReference>
<dbReference type="Pfam" id="PF03143">
    <property type="entry name" value="GTP_EFTU_D3"/>
    <property type="match status" value="1"/>
</dbReference>
<dbReference type="PRINTS" id="PR00315">
    <property type="entry name" value="ELONGATNFCT"/>
</dbReference>
<dbReference type="SUPFAM" id="SSF50465">
    <property type="entry name" value="EF-Tu/eEF-1alpha/eIF2-gamma C-terminal domain"/>
    <property type="match status" value="1"/>
</dbReference>
<dbReference type="SUPFAM" id="SSF52540">
    <property type="entry name" value="P-loop containing nucleoside triphosphate hydrolases"/>
    <property type="match status" value="1"/>
</dbReference>
<dbReference type="SUPFAM" id="SSF50447">
    <property type="entry name" value="Translation proteins"/>
    <property type="match status" value="1"/>
</dbReference>
<dbReference type="PROSITE" id="PS00301">
    <property type="entry name" value="G_TR_1"/>
    <property type="match status" value="1"/>
</dbReference>
<dbReference type="PROSITE" id="PS51722">
    <property type="entry name" value="G_TR_2"/>
    <property type="match status" value="1"/>
</dbReference>